<proteinExistence type="inferred from homology"/>
<name>NIKR_HALMA</name>
<dbReference type="EMBL" id="AY596297">
    <property type="protein sequence ID" value="AAV46181.1"/>
    <property type="molecule type" value="Genomic_DNA"/>
</dbReference>
<dbReference type="RefSeq" id="WP_004960664.1">
    <property type="nucleotide sequence ID" value="NZ_CP039138.1"/>
</dbReference>
<dbReference type="SMR" id="Q5V2S1"/>
<dbReference type="STRING" id="272569.rrnAC1238"/>
<dbReference type="PaxDb" id="272569-rrnAC1238"/>
<dbReference type="EnsemblBacteria" id="AAV46181">
    <property type="protein sequence ID" value="AAV46181"/>
    <property type="gene ID" value="rrnAC1238"/>
</dbReference>
<dbReference type="KEGG" id="hma:rrnAC1238"/>
<dbReference type="PATRIC" id="fig|272569.17.peg.1948"/>
<dbReference type="eggNOG" id="arCOG01008">
    <property type="taxonomic scope" value="Archaea"/>
</dbReference>
<dbReference type="HOGENOM" id="CLU_113319_0_0_2"/>
<dbReference type="Proteomes" id="UP000001169">
    <property type="component" value="Chromosome I"/>
</dbReference>
<dbReference type="GO" id="GO:0003677">
    <property type="term" value="F:DNA binding"/>
    <property type="evidence" value="ECO:0007669"/>
    <property type="project" value="UniProtKB-KW"/>
</dbReference>
<dbReference type="GO" id="GO:0003700">
    <property type="term" value="F:DNA-binding transcription factor activity"/>
    <property type="evidence" value="ECO:0007669"/>
    <property type="project" value="UniProtKB-UniRule"/>
</dbReference>
<dbReference type="GO" id="GO:0016151">
    <property type="term" value="F:nickel cation binding"/>
    <property type="evidence" value="ECO:0007669"/>
    <property type="project" value="UniProtKB-UniRule"/>
</dbReference>
<dbReference type="GO" id="GO:0010045">
    <property type="term" value="P:response to nickel cation"/>
    <property type="evidence" value="ECO:0007669"/>
    <property type="project" value="InterPro"/>
</dbReference>
<dbReference type="CDD" id="cd22231">
    <property type="entry name" value="RHH_NikR_HicB-like"/>
    <property type="match status" value="1"/>
</dbReference>
<dbReference type="Gene3D" id="3.30.70.1150">
    <property type="entry name" value="ACT-like. Chain A, domain 2"/>
    <property type="match status" value="1"/>
</dbReference>
<dbReference type="Gene3D" id="1.10.1220.10">
    <property type="entry name" value="Met repressor-like"/>
    <property type="match status" value="1"/>
</dbReference>
<dbReference type="HAMAP" id="MF_00476">
    <property type="entry name" value="NikR"/>
    <property type="match status" value="1"/>
</dbReference>
<dbReference type="InterPro" id="IPR027271">
    <property type="entry name" value="Acetolactate_synth/TF_NikR_C"/>
</dbReference>
<dbReference type="InterPro" id="IPR045865">
    <property type="entry name" value="ACT-like_dom_sf"/>
</dbReference>
<dbReference type="InterPro" id="IPR013321">
    <property type="entry name" value="Arc_rbn_hlx_hlx"/>
</dbReference>
<dbReference type="InterPro" id="IPR002145">
    <property type="entry name" value="CopG"/>
</dbReference>
<dbReference type="InterPro" id="IPR050192">
    <property type="entry name" value="CopG/NikR_regulator"/>
</dbReference>
<dbReference type="InterPro" id="IPR022988">
    <property type="entry name" value="Ni_resp_reg_NikR"/>
</dbReference>
<dbReference type="InterPro" id="IPR010985">
    <property type="entry name" value="Ribbon_hlx_hlx"/>
</dbReference>
<dbReference type="InterPro" id="IPR014864">
    <property type="entry name" value="TF_NikR_Ni-bd_C"/>
</dbReference>
<dbReference type="PANTHER" id="PTHR34719">
    <property type="entry name" value="NICKEL-RESPONSIVE REGULATOR"/>
    <property type="match status" value="1"/>
</dbReference>
<dbReference type="PANTHER" id="PTHR34719:SF3">
    <property type="entry name" value="NICKEL-RESPONSIVE REGULATOR-RELATED"/>
    <property type="match status" value="1"/>
</dbReference>
<dbReference type="Pfam" id="PF08753">
    <property type="entry name" value="NikR_C"/>
    <property type="match status" value="1"/>
</dbReference>
<dbReference type="Pfam" id="PF01402">
    <property type="entry name" value="RHH_1"/>
    <property type="match status" value="1"/>
</dbReference>
<dbReference type="SUPFAM" id="SSF55021">
    <property type="entry name" value="ACT-like"/>
    <property type="match status" value="1"/>
</dbReference>
<dbReference type="SUPFAM" id="SSF47598">
    <property type="entry name" value="Ribbon-helix-helix"/>
    <property type="match status" value="1"/>
</dbReference>
<evidence type="ECO:0000255" key="1">
    <source>
        <dbReference type="HAMAP-Rule" id="MF_00476"/>
    </source>
</evidence>
<accession>Q5V2S1</accession>
<sequence>MGVVSISMPDELEERIDTFADEHGYTGRSEVVREAVRNLMGEFEDKRLEDRELMAVVTVLFDYETTTVEEKMMHLRHDHESIVASNFHSHVGDRYCMELFVLEGQLEDISAFVGKVRATKDTLSVDYSVLPVDDINMFT</sequence>
<feature type="chain" id="PRO_0000139297" description="Putative nickel-responsive regulator">
    <location>
        <begin position="1"/>
        <end position="139"/>
    </location>
</feature>
<feature type="binding site" evidence="1">
    <location>
        <position position="77"/>
    </location>
    <ligand>
        <name>Ni(2+)</name>
        <dbReference type="ChEBI" id="CHEBI:49786"/>
    </ligand>
</feature>
<feature type="binding site" evidence="1">
    <location>
        <position position="88"/>
    </location>
    <ligand>
        <name>Ni(2+)</name>
        <dbReference type="ChEBI" id="CHEBI:49786"/>
    </ligand>
</feature>
<feature type="binding site" evidence="1">
    <location>
        <position position="90"/>
    </location>
    <ligand>
        <name>Ni(2+)</name>
        <dbReference type="ChEBI" id="CHEBI:49786"/>
    </ligand>
</feature>
<feature type="binding site" evidence="1">
    <location>
        <position position="96"/>
    </location>
    <ligand>
        <name>Ni(2+)</name>
        <dbReference type="ChEBI" id="CHEBI:49786"/>
    </ligand>
</feature>
<gene>
    <name type="ordered locus">rrnAC1238</name>
</gene>
<comment type="function">
    <text evidence="1">Transcriptional regulator.</text>
</comment>
<comment type="cofactor">
    <cofactor evidence="1">
        <name>Ni(2+)</name>
        <dbReference type="ChEBI" id="CHEBI:49786"/>
    </cofactor>
    <text evidence="1">Binds 1 nickel ion per subunit.</text>
</comment>
<comment type="similarity">
    <text evidence="1">Belongs to the transcriptional regulatory CopG/NikR family.</text>
</comment>
<keyword id="KW-0238">DNA-binding</keyword>
<keyword id="KW-0479">Metal-binding</keyword>
<keyword id="KW-0533">Nickel</keyword>
<keyword id="KW-1185">Reference proteome</keyword>
<keyword id="KW-0804">Transcription</keyword>
<keyword id="KW-0805">Transcription regulation</keyword>
<protein>
    <recommendedName>
        <fullName evidence="1">Putative nickel-responsive regulator</fullName>
    </recommendedName>
</protein>
<organism>
    <name type="scientific">Haloarcula marismortui (strain ATCC 43049 / DSM 3752 / JCM 8966 / VKM B-1809)</name>
    <name type="common">Halobacterium marismortui</name>
    <dbReference type="NCBI Taxonomy" id="272569"/>
    <lineage>
        <taxon>Archaea</taxon>
        <taxon>Methanobacteriati</taxon>
        <taxon>Methanobacteriota</taxon>
        <taxon>Stenosarchaea group</taxon>
        <taxon>Halobacteria</taxon>
        <taxon>Halobacteriales</taxon>
        <taxon>Haloarculaceae</taxon>
        <taxon>Haloarcula</taxon>
    </lineage>
</organism>
<reference key="1">
    <citation type="journal article" date="2004" name="Genome Res.">
        <title>Genome sequence of Haloarcula marismortui: a halophilic archaeon from the Dead Sea.</title>
        <authorList>
            <person name="Baliga N.S."/>
            <person name="Bonneau R."/>
            <person name="Facciotti M.T."/>
            <person name="Pan M."/>
            <person name="Glusman G."/>
            <person name="Deutsch E.W."/>
            <person name="Shannon P."/>
            <person name="Chiu Y."/>
            <person name="Weng R.S."/>
            <person name="Gan R.R."/>
            <person name="Hung P."/>
            <person name="Date S.V."/>
            <person name="Marcotte E."/>
            <person name="Hood L."/>
            <person name="Ng W.V."/>
        </authorList>
    </citation>
    <scope>NUCLEOTIDE SEQUENCE [LARGE SCALE GENOMIC DNA]</scope>
    <source>
        <strain>ATCC 43049 / DSM 3752 / JCM 8966 / VKM B-1809</strain>
    </source>
</reference>